<sequence length="681" mass="72390">MSLVPPLPILSPPSSNSSTTAPPPLQTQPTTPSAPPPVTPPPSPPQSPPPVVSSSPPPPVVSSPPPSSSPPPSPPVITSPPPTVASSPPPPVVIASPPPSTPATTPPAPPQTVSPPPPPDASPSPPAPTTTNPPPKPSPSPPGETPSPPGETPSPPKPSPSTPTPTTTTSPPPPPATSASPPSSNPTDPSTLAPPPTPLPVVPREKPIAKPTGPASNNGNNTLPSSSPGKSEVGTGGIVAIGVIVGLVFLSLFVMGVWFTRKRKRKDPGTFVGYTMPPSAYSSPQGSDVVLFNSRSSAPPKMRSHSGSDYMYASSDSGMVSNQRSWFSYDELSQVTSGFSEKNLLGEGGFGCVYKGVLSDGREVAVKQLKIGGSQGEREFKAEVEIISRVHHRHLVTLVGYCISEQHRLLVYDYVPNNTLHYHLHAPGRPVMTWETRVRVAAGAARGIAYLHEDCHPRIIHRDIKSSNILLDNSFEALVADFGLAKIAQELDLNTHVSTRVMGTFGYMAPEYATSGKLSEKADVYSYGVILLELITGRKPVDTSQPLGDESLVEWARPLLGQAIENEEFDELVDPRLGKNFIPGEMFRMVEAAAACVRHSAAKRPKMSQVVRALDTLEEATDITNGMRPGQSQVFDSRQQSAQIRMFQRMAFGSQDYSSDFFDRSQSHSSWGSRDQSRFVP</sequence>
<reference key="1">
    <citation type="journal article" date="1997" name="DNA Res.">
        <title>Structural analysis of Arabidopsis thaliana chromosome 5. I. Sequence features of the 1.6 Mb regions covered by twenty physically assigned P1 clones.</title>
        <authorList>
            <person name="Sato S."/>
            <person name="Kotani H."/>
            <person name="Nakamura Y."/>
            <person name="Kaneko T."/>
            <person name="Asamizu E."/>
            <person name="Fukami M."/>
            <person name="Miyajima N."/>
            <person name="Tabata S."/>
        </authorList>
    </citation>
    <scope>NUCLEOTIDE SEQUENCE [LARGE SCALE GENOMIC DNA]</scope>
    <source>
        <strain>cv. Columbia</strain>
    </source>
</reference>
<reference key="2">
    <citation type="journal article" date="2017" name="Plant J.">
        <title>Araport11: a complete reannotation of the Arabidopsis thaliana reference genome.</title>
        <authorList>
            <person name="Cheng C.Y."/>
            <person name="Krishnakumar V."/>
            <person name="Chan A.P."/>
            <person name="Thibaud-Nissen F."/>
            <person name="Schobel S."/>
            <person name="Town C.D."/>
        </authorList>
    </citation>
    <scope>GENOME REANNOTATION</scope>
    <source>
        <strain>cv. Columbia</strain>
    </source>
</reference>
<reference key="3">
    <citation type="journal article" date="2003" name="Science">
        <title>Empirical analysis of transcriptional activity in the Arabidopsis genome.</title>
        <authorList>
            <person name="Yamada K."/>
            <person name="Lim J."/>
            <person name="Dale J.M."/>
            <person name="Chen H."/>
            <person name="Shinn P."/>
            <person name="Palm C.J."/>
            <person name="Southwick A.M."/>
            <person name="Wu H.C."/>
            <person name="Kim C.J."/>
            <person name="Nguyen M."/>
            <person name="Pham P.K."/>
            <person name="Cheuk R.F."/>
            <person name="Karlin-Newmann G."/>
            <person name="Liu S.X."/>
            <person name="Lam B."/>
            <person name="Sakano H."/>
            <person name="Wu T."/>
            <person name="Yu G."/>
            <person name="Miranda M."/>
            <person name="Quach H.L."/>
            <person name="Tripp M."/>
            <person name="Chang C.H."/>
            <person name="Lee J.M."/>
            <person name="Toriumi M.J."/>
            <person name="Chan M.M."/>
            <person name="Tang C.C."/>
            <person name="Onodera C.S."/>
            <person name="Deng J.M."/>
            <person name="Akiyama K."/>
            <person name="Ansari Y."/>
            <person name="Arakawa T."/>
            <person name="Banh J."/>
            <person name="Banno F."/>
            <person name="Bowser L."/>
            <person name="Brooks S.Y."/>
            <person name="Carninci P."/>
            <person name="Chao Q."/>
            <person name="Choy N."/>
            <person name="Enju A."/>
            <person name="Goldsmith A.D."/>
            <person name="Gurjal M."/>
            <person name="Hansen N.F."/>
            <person name="Hayashizaki Y."/>
            <person name="Johnson-Hopson C."/>
            <person name="Hsuan V.W."/>
            <person name="Iida K."/>
            <person name="Karnes M."/>
            <person name="Khan S."/>
            <person name="Koesema E."/>
            <person name="Ishida J."/>
            <person name="Jiang P.X."/>
            <person name="Jones T."/>
            <person name="Kawai J."/>
            <person name="Kamiya A."/>
            <person name="Meyers C."/>
            <person name="Nakajima M."/>
            <person name="Narusaka M."/>
            <person name="Seki M."/>
            <person name="Sakurai T."/>
            <person name="Satou M."/>
            <person name="Tamse R."/>
            <person name="Vaysberg M."/>
            <person name="Wallender E.K."/>
            <person name="Wong C."/>
            <person name="Yamamura Y."/>
            <person name="Yuan S."/>
            <person name="Shinozaki K."/>
            <person name="Davis R.W."/>
            <person name="Theologis A."/>
            <person name="Ecker J.R."/>
        </authorList>
    </citation>
    <scope>NUCLEOTIDE SEQUENCE [LARGE SCALE MRNA]</scope>
    <source>
        <strain>cv. Columbia</strain>
    </source>
</reference>
<reference key="4">
    <citation type="journal article" date="2002" name="Plant Mol. Biol.">
        <title>The proline-rich, extensin-like receptor kinase-1 (PERK1) gene is rapidly induced by wounding.</title>
        <authorList>
            <person name="Silva N.F."/>
            <person name="Goring D.R."/>
        </authorList>
    </citation>
    <scope>GENE FAMILY</scope>
</reference>
<reference key="5">
    <citation type="journal article" date="2004" name="Plant Cell Physiol.">
        <title>A comprehensive expression analysis of the Arabidopsis proline-rich extensin-like receptor kinase gene family using bioinformatic and experimental approaches.</title>
        <authorList>
            <person name="Nakhamchik A."/>
            <person name="Zhao Z."/>
            <person name="Provart N.J."/>
            <person name="Shiu S.-H."/>
            <person name="Keatley S.K."/>
            <person name="Cameron R.K."/>
            <person name="Goring D.R."/>
        </authorList>
    </citation>
    <scope>TISSUE SPECIFICITY</scope>
    <scope>GENE FAMILY</scope>
    <scope>NOMENCLATURE</scope>
</reference>
<reference key="6">
    <citation type="journal article" date="2003" name="Mol. Cell. Proteomics">
        <title>Large-scale analysis of in vivo phosphorylated membrane proteins by immobilized metal ion affinity chromatography and mass spectrometry.</title>
        <authorList>
            <person name="Nuehse T.S."/>
            <person name="Stensballe A."/>
            <person name="Jensen O.N."/>
            <person name="Peck S.C."/>
        </authorList>
    </citation>
    <scope>SUBCELLULAR LOCATION</scope>
    <scope>IDENTIFICATION BY MASS SPECTROMETRY [LARGE SCALE ANALYSIS]</scope>
    <source>
        <strain>cv. La-0</strain>
    </source>
</reference>
<reference key="7">
    <citation type="journal article" date="2004" name="Plant Cell">
        <title>Phosphoproteomics of the Arabidopsis plasma membrane and a new phosphorylation site database.</title>
        <authorList>
            <person name="Nuehse T.S."/>
            <person name="Stensballe A."/>
            <person name="Jensen O.N."/>
            <person name="Peck S.C."/>
        </authorList>
    </citation>
    <scope>SUBCELLULAR LOCATION</scope>
    <scope>IDENTIFICATION BY MASS SPECTROMETRY [LARGE SCALE ANALYSIS]</scope>
</reference>
<reference key="8">
    <citation type="journal article" date="2007" name="Mol. Cell. Proteomics">
        <title>A high content in lipid-modified peripheral proteins and integral receptor kinases features in the arabidopsis plasma membrane proteome.</title>
        <authorList>
            <person name="Marmagne A."/>
            <person name="Ferro M."/>
            <person name="Meinnel T."/>
            <person name="Bruley C."/>
            <person name="Kuhn L."/>
            <person name="Garin J."/>
            <person name="Barbier-Brygoo H."/>
            <person name="Ephritikhine G."/>
        </authorList>
    </citation>
    <scope>IDENTIFICATION BY MASS SPECTROMETRY</scope>
    <scope>SUBCELLULAR LOCATION [LARGE SCALE ANALYSIS]</scope>
</reference>
<reference key="9">
    <citation type="journal article" date="2015" name="J. Exp. Bot.">
        <title>PERK-KIPK-KCBP signalling negatively regulates root growth in Arabidopsis thaliana.</title>
        <authorList>
            <person name="Humphrey T.V."/>
            <person name="Haasen K.E."/>
            <person name="Aldea-Brydges M.G."/>
            <person name="Sun H."/>
            <person name="Zayed Y."/>
            <person name="Indriolo E."/>
            <person name="Goring D.R."/>
        </authorList>
    </citation>
    <scope>INTERACTION WITH KIPK1 AND KIPK2</scope>
    <scope>FUNCTION</scope>
</reference>
<comment type="function">
    <text evidence="9">Could be involved in the negative regulation of root growth.</text>
</comment>
<comment type="catalytic activity">
    <reaction>
        <text>L-seryl-[protein] + ATP = O-phospho-L-seryl-[protein] + ADP + H(+)</text>
        <dbReference type="Rhea" id="RHEA:17989"/>
        <dbReference type="Rhea" id="RHEA-COMP:9863"/>
        <dbReference type="Rhea" id="RHEA-COMP:11604"/>
        <dbReference type="ChEBI" id="CHEBI:15378"/>
        <dbReference type="ChEBI" id="CHEBI:29999"/>
        <dbReference type="ChEBI" id="CHEBI:30616"/>
        <dbReference type="ChEBI" id="CHEBI:83421"/>
        <dbReference type="ChEBI" id="CHEBI:456216"/>
        <dbReference type="EC" id="2.7.11.1"/>
    </reaction>
</comment>
<comment type="catalytic activity">
    <reaction>
        <text>L-threonyl-[protein] + ATP = O-phospho-L-threonyl-[protein] + ADP + H(+)</text>
        <dbReference type="Rhea" id="RHEA:46608"/>
        <dbReference type="Rhea" id="RHEA-COMP:11060"/>
        <dbReference type="Rhea" id="RHEA-COMP:11605"/>
        <dbReference type="ChEBI" id="CHEBI:15378"/>
        <dbReference type="ChEBI" id="CHEBI:30013"/>
        <dbReference type="ChEBI" id="CHEBI:30616"/>
        <dbReference type="ChEBI" id="CHEBI:61977"/>
        <dbReference type="ChEBI" id="CHEBI:456216"/>
        <dbReference type="EC" id="2.7.11.1"/>
    </reaction>
</comment>
<comment type="subunit">
    <text evidence="9">Interacts with KIPK1 and KIPK2 (via its cytosolic domain).</text>
</comment>
<comment type="subcellular location">
    <subcellularLocation>
        <location evidence="6 7 10">Cell membrane</location>
        <topology evidence="6 7 10">Single-pass membrane protein</topology>
    </subcellularLocation>
</comment>
<comment type="tissue specificity">
    <text evidence="8">Mostly expressed in seedlings, roots, inflorescence bolts and flower buds.</text>
</comment>
<comment type="similarity">
    <text evidence="3">Belongs to the protein kinase superfamily. Ser/Thr protein kinase family.</text>
</comment>
<accession>Q9FFW5</accession>
<protein>
    <recommendedName>
        <fullName>Proline-rich receptor-like protein kinase PERK8</fullName>
        <ecNumber>2.7.11.1</ecNumber>
    </recommendedName>
    <alternativeName>
        <fullName>Proline-rich extensin-like receptor kinase 8</fullName>
        <shortName>AtPERK8</shortName>
    </alternativeName>
</protein>
<name>PERK8_ARATH</name>
<proteinExistence type="evidence at protein level"/>
<evidence type="ECO:0000250" key="1">
    <source>
        <dbReference type="UniProtKB" id="O48814"/>
    </source>
</evidence>
<evidence type="ECO:0000255" key="2"/>
<evidence type="ECO:0000255" key="3">
    <source>
        <dbReference type="PROSITE-ProRule" id="PRU00159"/>
    </source>
</evidence>
<evidence type="ECO:0000255" key="4">
    <source>
        <dbReference type="PROSITE-ProRule" id="PRU10027"/>
    </source>
</evidence>
<evidence type="ECO:0000256" key="5">
    <source>
        <dbReference type="SAM" id="MobiDB-lite"/>
    </source>
</evidence>
<evidence type="ECO:0000269" key="6">
    <source>
    </source>
</evidence>
<evidence type="ECO:0000269" key="7">
    <source>
    </source>
</evidence>
<evidence type="ECO:0000269" key="8">
    <source>
    </source>
</evidence>
<evidence type="ECO:0000269" key="9">
    <source>
    </source>
</evidence>
<evidence type="ECO:0000305" key="10">
    <source>
    </source>
</evidence>
<keyword id="KW-0067">ATP-binding</keyword>
<keyword id="KW-1003">Cell membrane</keyword>
<keyword id="KW-0325">Glycoprotein</keyword>
<keyword id="KW-0418">Kinase</keyword>
<keyword id="KW-0472">Membrane</keyword>
<keyword id="KW-0547">Nucleotide-binding</keyword>
<keyword id="KW-0597">Phosphoprotein</keyword>
<keyword id="KW-1185">Reference proteome</keyword>
<keyword id="KW-0723">Serine/threonine-protein kinase</keyword>
<keyword id="KW-0808">Transferase</keyword>
<keyword id="KW-0812">Transmembrane</keyword>
<keyword id="KW-1133">Transmembrane helix</keyword>
<gene>
    <name type="primary">PERK8</name>
    <name type="ordered locus">At5g38560</name>
    <name type="ORF">MBB18.10</name>
</gene>
<dbReference type="EC" id="2.7.11.1"/>
<dbReference type="EMBL" id="AB005231">
    <property type="protein sequence ID" value="BAB10146.1"/>
    <property type="molecule type" value="Genomic_DNA"/>
</dbReference>
<dbReference type="EMBL" id="CP002688">
    <property type="protein sequence ID" value="AED94334.1"/>
    <property type="molecule type" value="Genomic_DNA"/>
</dbReference>
<dbReference type="EMBL" id="AF424623">
    <property type="protein sequence ID" value="AAL11616.1"/>
    <property type="molecule type" value="mRNA"/>
</dbReference>
<dbReference type="EMBL" id="AY075681">
    <property type="protein sequence ID" value="AAL77688.1"/>
    <property type="molecule type" value="mRNA"/>
</dbReference>
<dbReference type="EMBL" id="AY113039">
    <property type="protein sequence ID" value="AAM47347.1"/>
    <property type="molecule type" value="mRNA"/>
</dbReference>
<dbReference type="RefSeq" id="NP_198672.1">
    <property type="nucleotide sequence ID" value="NM_123217.3"/>
</dbReference>
<dbReference type="SMR" id="Q9FFW5"/>
<dbReference type="BioGRID" id="19095">
    <property type="interactions" value="2"/>
</dbReference>
<dbReference type="FunCoup" id="Q9FFW5">
    <property type="interactions" value="598"/>
</dbReference>
<dbReference type="IntAct" id="Q9FFW5">
    <property type="interactions" value="2"/>
</dbReference>
<dbReference type="STRING" id="3702.Q9FFW5"/>
<dbReference type="GlyCosmos" id="Q9FFW5">
    <property type="glycosylation" value="2 sites, No reported glycans"/>
</dbReference>
<dbReference type="GlyGen" id="Q9FFW5">
    <property type="glycosylation" value="7 sites"/>
</dbReference>
<dbReference type="iPTMnet" id="Q9FFW5"/>
<dbReference type="PaxDb" id="3702-AT5G38560.1"/>
<dbReference type="ProteomicsDB" id="236772"/>
<dbReference type="EnsemblPlants" id="AT5G38560.1">
    <property type="protein sequence ID" value="AT5G38560.1"/>
    <property type="gene ID" value="AT5G38560"/>
</dbReference>
<dbReference type="GeneID" id="833844"/>
<dbReference type="Gramene" id="AT5G38560.1">
    <property type="protein sequence ID" value="AT5G38560.1"/>
    <property type="gene ID" value="AT5G38560"/>
</dbReference>
<dbReference type="KEGG" id="ath:AT5G38560"/>
<dbReference type="Araport" id="AT5G38560"/>
<dbReference type="TAIR" id="AT5G38560">
    <property type="gene designation" value="PERK8"/>
</dbReference>
<dbReference type="eggNOG" id="KOG1187">
    <property type="taxonomic scope" value="Eukaryota"/>
</dbReference>
<dbReference type="HOGENOM" id="CLU_000288_106_3_1"/>
<dbReference type="InParanoid" id="Q9FFW5"/>
<dbReference type="OMA" id="KACMSDI"/>
<dbReference type="PhylomeDB" id="Q9FFW5"/>
<dbReference type="PRO" id="PR:Q9FFW5"/>
<dbReference type="Proteomes" id="UP000006548">
    <property type="component" value="Chromosome 5"/>
</dbReference>
<dbReference type="ExpressionAtlas" id="Q9FFW5">
    <property type="expression patterns" value="baseline and differential"/>
</dbReference>
<dbReference type="GO" id="GO:0005886">
    <property type="term" value="C:plasma membrane"/>
    <property type="evidence" value="ECO:0007005"/>
    <property type="project" value="TAIR"/>
</dbReference>
<dbReference type="GO" id="GO:0005524">
    <property type="term" value="F:ATP binding"/>
    <property type="evidence" value="ECO:0007669"/>
    <property type="project" value="UniProtKB-KW"/>
</dbReference>
<dbReference type="GO" id="GO:0019901">
    <property type="term" value="F:protein kinase binding"/>
    <property type="evidence" value="ECO:0000353"/>
    <property type="project" value="UniProtKB"/>
</dbReference>
<dbReference type="GO" id="GO:0106310">
    <property type="term" value="F:protein serine kinase activity"/>
    <property type="evidence" value="ECO:0007669"/>
    <property type="project" value="RHEA"/>
</dbReference>
<dbReference type="GO" id="GO:0004674">
    <property type="term" value="F:protein serine/threonine kinase activity"/>
    <property type="evidence" value="ECO:0007669"/>
    <property type="project" value="UniProtKB-KW"/>
</dbReference>
<dbReference type="CDD" id="cd14066">
    <property type="entry name" value="STKc_IRAK"/>
    <property type="match status" value="1"/>
</dbReference>
<dbReference type="FunFam" id="3.30.200.20:FF:000212">
    <property type="entry name" value="Proline-rich receptor-like protein kinase PERK8"/>
    <property type="match status" value="1"/>
</dbReference>
<dbReference type="FunFam" id="1.10.510.10:FF:000173">
    <property type="entry name" value="proline-rich receptor-like protein kinase PERK8"/>
    <property type="match status" value="1"/>
</dbReference>
<dbReference type="Gene3D" id="3.30.200.20">
    <property type="entry name" value="Phosphorylase Kinase, domain 1"/>
    <property type="match status" value="1"/>
</dbReference>
<dbReference type="Gene3D" id="1.10.510.10">
    <property type="entry name" value="Transferase(Phosphotransferase) domain 1"/>
    <property type="match status" value="1"/>
</dbReference>
<dbReference type="InterPro" id="IPR011009">
    <property type="entry name" value="Kinase-like_dom_sf"/>
</dbReference>
<dbReference type="InterPro" id="IPR047117">
    <property type="entry name" value="PERK1-13-like"/>
</dbReference>
<dbReference type="InterPro" id="IPR003882">
    <property type="entry name" value="Pistil_extensin"/>
</dbReference>
<dbReference type="InterPro" id="IPR000719">
    <property type="entry name" value="Prot_kinase_dom"/>
</dbReference>
<dbReference type="InterPro" id="IPR017441">
    <property type="entry name" value="Protein_kinase_ATP_BS"/>
</dbReference>
<dbReference type="InterPro" id="IPR008271">
    <property type="entry name" value="Ser/Thr_kinase_AS"/>
</dbReference>
<dbReference type="PANTHER" id="PTHR47982:SF32">
    <property type="entry name" value="NON-SPECIFIC SERINE_THREONINE PROTEIN KINASE"/>
    <property type="match status" value="1"/>
</dbReference>
<dbReference type="PANTHER" id="PTHR47982">
    <property type="entry name" value="PROLINE-RICH RECEPTOR-LIKE PROTEIN KINASE PERK4"/>
    <property type="match status" value="1"/>
</dbReference>
<dbReference type="Pfam" id="PF00069">
    <property type="entry name" value="Pkinase"/>
    <property type="match status" value="1"/>
</dbReference>
<dbReference type="PRINTS" id="PR01218">
    <property type="entry name" value="PSTLEXTENSIN"/>
</dbReference>
<dbReference type="SMART" id="SM00220">
    <property type="entry name" value="S_TKc"/>
    <property type="match status" value="1"/>
</dbReference>
<dbReference type="SUPFAM" id="SSF56112">
    <property type="entry name" value="Protein kinase-like (PK-like)"/>
    <property type="match status" value="1"/>
</dbReference>
<dbReference type="PROSITE" id="PS00107">
    <property type="entry name" value="PROTEIN_KINASE_ATP"/>
    <property type="match status" value="1"/>
</dbReference>
<dbReference type="PROSITE" id="PS50011">
    <property type="entry name" value="PROTEIN_KINASE_DOM"/>
    <property type="match status" value="1"/>
</dbReference>
<dbReference type="PROSITE" id="PS00108">
    <property type="entry name" value="PROTEIN_KINASE_ST"/>
    <property type="match status" value="1"/>
</dbReference>
<feature type="chain" id="PRO_0000400060" description="Proline-rich receptor-like protein kinase PERK8">
    <location>
        <begin position="1"/>
        <end position="681"/>
    </location>
</feature>
<feature type="topological domain" description="Extracellular" evidence="2">
    <location>
        <begin position="1"/>
        <end position="237"/>
    </location>
</feature>
<feature type="transmembrane region" description="Helical" evidence="2">
    <location>
        <begin position="238"/>
        <end position="258"/>
    </location>
</feature>
<feature type="topological domain" description="Cytoplasmic" evidence="2">
    <location>
        <begin position="259"/>
        <end position="681"/>
    </location>
</feature>
<feature type="domain" description="Protein kinase" evidence="3">
    <location>
        <begin position="339"/>
        <end position="617"/>
    </location>
</feature>
<feature type="region of interest" description="Disordered" evidence="5">
    <location>
        <begin position="1"/>
        <end position="231"/>
    </location>
</feature>
<feature type="compositionally biased region" description="Pro residues" evidence="5">
    <location>
        <begin position="1"/>
        <end position="11"/>
    </location>
</feature>
<feature type="compositionally biased region" description="Pro residues" evidence="5">
    <location>
        <begin position="21"/>
        <end position="163"/>
    </location>
</feature>
<feature type="compositionally biased region" description="Low complexity" evidence="5">
    <location>
        <begin position="177"/>
        <end position="191"/>
    </location>
</feature>
<feature type="compositionally biased region" description="Pro residues" evidence="5">
    <location>
        <begin position="192"/>
        <end position="201"/>
    </location>
</feature>
<feature type="compositionally biased region" description="Polar residues" evidence="5">
    <location>
        <begin position="214"/>
        <end position="229"/>
    </location>
</feature>
<feature type="active site" description="Proton acceptor" evidence="3 4">
    <location>
        <position position="463"/>
    </location>
</feature>
<feature type="binding site" evidence="3">
    <location>
        <begin position="345"/>
        <end position="353"/>
    </location>
    <ligand>
        <name>ATP</name>
        <dbReference type="ChEBI" id="CHEBI:30616"/>
    </ligand>
</feature>
<feature type="binding site" evidence="3">
    <location>
        <position position="367"/>
    </location>
    <ligand>
        <name>ATP</name>
        <dbReference type="ChEBI" id="CHEBI:30616"/>
    </ligand>
</feature>
<feature type="modified residue" description="Phosphotyrosine" evidence="1">
    <location>
        <position position="412"/>
    </location>
</feature>
<feature type="modified residue" description="Phosphoserine" evidence="1">
    <location>
        <position position="467"/>
    </location>
</feature>
<feature type="modified residue" description="Phosphoserine" evidence="1">
    <location>
        <position position="498"/>
    </location>
</feature>
<feature type="modified residue" description="Phosphothreonine" evidence="1">
    <location>
        <position position="499"/>
    </location>
</feature>
<feature type="modified residue" description="Phosphothreonine" evidence="1">
    <location>
        <position position="504"/>
    </location>
</feature>
<feature type="modified residue" description="Phosphotyrosine" evidence="1">
    <location>
        <position position="512"/>
    </location>
</feature>
<feature type="glycosylation site" description="N-linked (GlcNAc...) asparagine" evidence="2">
    <location>
        <position position="16"/>
    </location>
</feature>
<feature type="glycosylation site" description="N-linked (GlcNAc...) asparagine" evidence="2">
    <location>
        <position position="220"/>
    </location>
</feature>
<organism>
    <name type="scientific">Arabidopsis thaliana</name>
    <name type="common">Mouse-ear cress</name>
    <dbReference type="NCBI Taxonomy" id="3702"/>
    <lineage>
        <taxon>Eukaryota</taxon>
        <taxon>Viridiplantae</taxon>
        <taxon>Streptophyta</taxon>
        <taxon>Embryophyta</taxon>
        <taxon>Tracheophyta</taxon>
        <taxon>Spermatophyta</taxon>
        <taxon>Magnoliopsida</taxon>
        <taxon>eudicotyledons</taxon>
        <taxon>Gunneridae</taxon>
        <taxon>Pentapetalae</taxon>
        <taxon>rosids</taxon>
        <taxon>malvids</taxon>
        <taxon>Brassicales</taxon>
        <taxon>Brassicaceae</taxon>
        <taxon>Camelineae</taxon>
        <taxon>Arabidopsis</taxon>
    </lineage>
</organism>